<comment type="function">
    <text evidence="1">FMRFamides and FMRFamide-like peptides are neuropeptides.</text>
</comment>
<comment type="subcellular location">
    <subcellularLocation>
        <location evidence="6">Secreted</location>
    </subcellularLocation>
</comment>
<comment type="similarity">
    <text evidence="2">Belongs to the FARP (FMRF amide related peptide) family.</text>
</comment>
<dbReference type="GO" id="GO:0005576">
    <property type="term" value="C:extracellular region"/>
    <property type="evidence" value="ECO:0007669"/>
    <property type="project" value="UniProtKB-SubCell"/>
</dbReference>
<dbReference type="GO" id="GO:0007218">
    <property type="term" value="P:neuropeptide signaling pathway"/>
    <property type="evidence" value="ECO:0007669"/>
    <property type="project" value="UniProtKB-KW"/>
</dbReference>
<proteinExistence type="evidence at protein level"/>
<reference evidence="5" key="1">
    <citation type="journal article" date="2012" name="Syst. Biol.">
        <title>Peptidomics-based phylogeny and biogeography of Mantophasmatodea (Hexapoda).</title>
        <authorList>
            <person name="Predel R."/>
            <person name="Neupert S."/>
            <person name="Huetteroth W."/>
            <person name="Kahnt J."/>
            <person name="Waidelich D."/>
            <person name="Roth S."/>
        </authorList>
    </citation>
    <scope>PROTEIN SEQUENCE</scope>
    <scope>AMIDATION AT LEU-9</scope>
    <source>
        <tissue evidence="3">Thoracic perisympathetic organs</tissue>
    </source>
</reference>
<name>FAR4_HEMMO</name>
<evidence type="ECO:0000250" key="1">
    <source>
        <dbReference type="UniProtKB" id="P34405"/>
    </source>
</evidence>
<evidence type="ECO:0000255" key="2"/>
<evidence type="ECO:0000269" key="3">
    <source>
    </source>
</evidence>
<evidence type="ECO:0000303" key="4">
    <source>
    </source>
</evidence>
<evidence type="ECO:0000305" key="5"/>
<evidence type="ECO:0000305" key="6">
    <source>
    </source>
</evidence>
<protein>
    <recommendedName>
        <fullName evidence="4">Extended FMRFamide-4</fullName>
        <shortName evidence="4">FMRFa-4</shortName>
    </recommendedName>
</protein>
<accession>B3A0C3</accession>
<feature type="peptide" id="PRO_0000421504" description="Extended FMRFamide-4" evidence="3">
    <location>
        <begin position="1"/>
        <end position="9"/>
    </location>
</feature>
<feature type="modified residue" description="Leucine amide" evidence="3">
    <location>
        <position position="9"/>
    </location>
</feature>
<feature type="unsure residue" description="L or I" evidence="3">
    <location>
        <position position="7"/>
    </location>
</feature>
<feature type="unsure residue" description="L or I" evidence="3">
    <location>
        <position position="9"/>
    </location>
</feature>
<sequence length="9" mass="993">GVDSSFLRL</sequence>
<organism>
    <name type="scientific">Hemilobophasma montaguense</name>
    <name type="common">Gladiator</name>
    <name type="synonym">Heel-walker</name>
    <dbReference type="NCBI Taxonomy" id="253130"/>
    <lineage>
        <taxon>Eukaryota</taxon>
        <taxon>Metazoa</taxon>
        <taxon>Ecdysozoa</taxon>
        <taxon>Arthropoda</taxon>
        <taxon>Hexapoda</taxon>
        <taxon>Insecta</taxon>
        <taxon>Pterygota</taxon>
        <taxon>Neoptera</taxon>
        <taxon>Polyneoptera</taxon>
        <taxon>Mantophasmatodea</taxon>
        <taxon>Austrophasmatidae</taxon>
        <taxon>Hemilobophasma</taxon>
    </lineage>
</organism>
<keyword id="KW-0027">Amidation</keyword>
<keyword id="KW-0903">Direct protein sequencing</keyword>
<keyword id="KW-0527">Neuropeptide</keyword>
<keyword id="KW-0964">Secreted</keyword>